<reference key="1">
    <citation type="journal article" date="1986" name="EMBO J.">
        <title>The complete nucleotide sequence of the tobacco chloroplast genome: its gene organization and expression.</title>
        <authorList>
            <person name="Shinozaki K."/>
            <person name="Ohme M."/>
            <person name="Tanaka M."/>
            <person name="Wakasugi T."/>
            <person name="Hayashida N."/>
            <person name="Matsubayashi T."/>
            <person name="Zaita N."/>
            <person name="Chunwongse J."/>
            <person name="Obokata J."/>
            <person name="Yamaguchi-Shinozaki K."/>
            <person name="Ohto C."/>
            <person name="Torazawa K."/>
            <person name="Meng B.-Y."/>
            <person name="Sugita M."/>
            <person name="Deno H."/>
            <person name="Kamogashira T."/>
            <person name="Yamada K."/>
            <person name="Kusuda J."/>
            <person name="Takaiwa F."/>
            <person name="Kato A."/>
            <person name="Tohdoh N."/>
            <person name="Shimada H."/>
            <person name="Sugiura M."/>
        </authorList>
    </citation>
    <scope>NUCLEOTIDE SEQUENCE [LARGE SCALE GENOMIC DNA]</scope>
    <source>
        <strain>cv. Bright Yellow 4</strain>
    </source>
</reference>
<reference key="2">
    <citation type="journal article" date="2002" name="Plant Cell Physiol.">
        <title>Chloroplast transformation with modified accD operon increases acetyl-CoA carboxylase and causes extension of leaf longevity and increase in seed yield in tobacco.</title>
        <authorList>
            <person name="Madoka Y."/>
            <person name="Tomizawa K."/>
            <person name="Mizoi J."/>
            <person name="Nishida I."/>
            <person name="Nagano Y."/>
            <person name="Sasaki Y."/>
        </authorList>
    </citation>
    <scope>DETECTION IN CHLOROPLASTS</scope>
    <scope>OVEREXPRESSION</scope>
    <source>
        <strain>cv. Xanthi</strain>
        <tissue>Fruit</tissue>
        <tissue>Leaf</tissue>
    </source>
</reference>
<reference key="3">
    <citation type="journal article" date="2004" name="Mol. Cells">
        <title>Characterization of the plastid-encoded carboxyltransferase subunit (accD) gene of potato.</title>
        <authorList>
            <person name="Lee S.S."/>
            <person name="Jeong W.J."/>
            <person name="Bae J.M."/>
            <person name="Bang J.W."/>
            <person name="Liu J.R."/>
            <person name="Harn C.H."/>
        </authorList>
    </citation>
    <scope>TISSUE SPECIFICITY</scope>
</reference>
<comment type="function">
    <text evidence="2">Component of the acetyl coenzyme A carboxylase (ACC) complex. Biotin carboxylase (BC) catalyzes the carboxylation of biotin on its carrier protein (BCCP) and then the CO(2) group is transferred by the transcarboxylase to acetyl-CoA to form malonyl-CoA.</text>
</comment>
<comment type="catalytic activity">
    <reaction evidence="2">
        <text>N(6)-carboxybiotinyl-L-lysyl-[protein] + acetyl-CoA = N(6)-biotinyl-L-lysyl-[protein] + malonyl-CoA</text>
        <dbReference type="Rhea" id="RHEA:54728"/>
        <dbReference type="Rhea" id="RHEA-COMP:10505"/>
        <dbReference type="Rhea" id="RHEA-COMP:10506"/>
        <dbReference type="ChEBI" id="CHEBI:57288"/>
        <dbReference type="ChEBI" id="CHEBI:57384"/>
        <dbReference type="ChEBI" id="CHEBI:83144"/>
        <dbReference type="ChEBI" id="CHEBI:83145"/>
        <dbReference type="EC" id="2.1.3.15"/>
    </reaction>
</comment>
<comment type="cofactor">
    <cofactor evidence="2">
        <name>Zn(2+)</name>
        <dbReference type="ChEBI" id="CHEBI:29105"/>
    </cofactor>
    <text evidence="2">Binds 1 zinc ion per subunit.</text>
</comment>
<comment type="pathway">
    <text evidence="2">Lipid metabolism; malonyl-CoA biosynthesis; malonyl-CoA from acetyl-CoA: step 1/1.</text>
</comment>
<comment type="subunit">
    <text evidence="1">Acetyl-CoA carboxylase is a heterohexamer composed of biotin carboxyl carrier protein, biotin carboxylase and 2 subunits each of ACCase subunit alpha and ACCase plastid-coded subunit beta (accD).</text>
</comment>
<comment type="subcellular location">
    <subcellularLocation>
        <location evidence="2">Plastid</location>
        <location evidence="2">Chloroplast stroma</location>
    </subcellularLocation>
</comment>
<comment type="tissue specificity">
    <text evidence="5">RNA expressed in leaf, root and stem; the least expression occurs in stems.</text>
</comment>
<comment type="biotechnology">
    <text>Overexpression of the accD operon increases the specific activity of acetyl-coenzyme A carboxylase, increases leaf longevity and seed production. The accD operon consists of accD, psaI, ycf4, cemA, and petA in this order.</text>
</comment>
<comment type="miscellaneous">
    <text>The protein in tobacco runs as 53 kDa; thus this may not be the correct start site.</text>
</comment>
<comment type="similarity">
    <text evidence="2">Belongs to the AccD/PCCB family.</text>
</comment>
<comment type="sequence caution" evidence="6">
    <conflict type="erroneous initiation">
        <sequence resource="EMBL-CDS" id="CAA77362"/>
    </conflict>
    <text>Extended N-terminus.</text>
</comment>
<sequence>MERWWFNSMLFKKEFERRCGLNKSMGSLGPIENTNEDPNRKVKNIHSWRNRDNSSCSNVDYLFGVKDIRNFISDDTFLVSDRNGDSYSIYFDIENHIFEIDNDHSFLSELESSFYSYRNSNYRNNGFRGEDPYYNSYMYDTQYSWNNHINSCIDSYLQSQICIDTSIISGSENYGDSYIYRAVCGGESRNSSENEGSSRRTRTKGSDLTIRESSNDLEVTQKYRHLWVQCENCYGLNYKKFLKSKMNICEQCGYHLKMSSSDRIELLIDPGTWDPMDEDMVSLDPIEFHSEEEPYKDRIDSYQRKTGLTEAVQTGIGQLNGIPVAIGVMDFQFMGGSMGSVVGEKITRLIEYAANQILPLIIVCASGGARMQEGSLSLMQMAKISSALYDYQLNKKLFYVSILTSPTTGGVTASFGMLGDIIIAEPNAYIAFAGKRVIEQTLNKTVPEGSQAAEYLFQKGLFDLIVPRNLLKSVLSELFKLHAFFPLNQKSSKIK</sequence>
<accession>P12219</accession>
<gene>
    <name evidence="2" type="primary">accD</name>
    <name type="synonym">ycf11</name>
    <name type="synonym">zfpA</name>
</gene>
<protein>
    <recommendedName>
        <fullName evidence="2">Acetyl-coenzyme A carboxylase carboxyl transferase subunit beta, chloroplastic</fullName>
        <shortName evidence="2">ACCase subunit beta</shortName>
        <shortName evidence="2">Acetyl-CoA carboxylase carboxyltransferase subunit beta</shortName>
        <ecNumber evidence="2">2.1.3.15</ecNumber>
    </recommendedName>
</protein>
<organism>
    <name type="scientific">Nicotiana tabacum</name>
    <name type="common">Common tobacco</name>
    <dbReference type="NCBI Taxonomy" id="4097"/>
    <lineage>
        <taxon>Eukaryota</taxon>
        <taxon>Viridiplantae</taxon>
        <taxon>Streptophyta</taxon>
        <taxon>Embryophyta</taxon>
        <taxon>Tracheophyta</taxon>
        <taxon>Spermatophyta</taxon>
        <taxon>Magnoliopsida</taxon>
        <taxon>eudicotyledons</taxon>
        <taxon>Gunneridae</taxon>
        <taxon>Pentapetalae</taxon>
        <taxon>asterids</taxon>
        <taxon>lamiids</taxon>
        <taxon>Solanales</taxon>
        <taxon>Solanaceae</taxon>
        <taxon>Nicotianoideae</taxon>
        <taxon>Nicotianeae</taxon>
        <taxon>Nicotiana</taxon>
    </lineage>
</organism>
<feature type="chain" id="PRO_0000199796" description="Acetyl-coenzyme A carboxylase carboxyl transferase subunit beta, chloroplastic">
    <location>
        <begin position="1"/>
        <end position="495"/>
    </location>
</feature>
<feature type="domain" description="CoA carboxyltransferase N-terminal" evidence="3">
    <location>
        <begin position="226"/>
        <end position="495"/>
    </location>
</feature>
<feature type="zinc finger region" description="C4-type" evidence="2">
    <location>
        <begin position="230"/>
        <end position="252"/>
    </location>
</feature>
<feature type="region of interest" description="Disordered" evidence="4">
    <location>
        <begin position="187"/>
        <end position="208"/>
    </location>
</feature>
<feature type="binding site" evidence="2">
    <location>
        <position position="230"/>
    </location>
    <ligand>
        <name>Zn(2+)</name>
        <dbReference type="ChEBI" id="CHEBI:29105"/>
    </ligand>
</feature>
<feature type="binding site" evidence="2">
    <location>
        <position position="233"/>
    </location>
    <ligand>
        <name>Zn(2+)</name>
        <dbReference type="ChEBI" id="CHEBI:29105"/>
    </ligand>
</feature>
<feature type="binding site" evidence="2">
    <location>
        <position position="249"/>
    </location>
    <ligand>
        <name>Zn(2+)</name>
        <dbReference type="ChEBI" id="CHEBI:29105"/>
    </ligand>
</feature>
<feature type="binding site" evidence="2">
    <location>
        <position position="252"/>
    </location>
    <ligand>
        <name>Zn(2+)</name>
        <dbReference type="ChEBI" id="CHEBI:29105"/>
    </ligand>
</feature>
<dbReference type="EC" id="2.1.3.15" evidence="2"/>
<dbReference type="EMBL" id="Z00044">
    <property type="protein sequence ID" value="CAA77362.1"/>
    <property type="status" value="ALT_INIT"/>
    <property type="molecule type" value="Genomic_DNA"/>
</dbReference>
<dbReference type="PIR" id="A05196">
    <property type="entry name" value="A05196"/>
</dbReference>
<dbReference type="RefSeq" id="NP_054508.1">
    <property type="nucleotide sequence ID" value="NC_001879.2"/>
</dbReference>
<dbReference type="SMR" id="P12219"/>
<dbReference type="GeneID" id="800510"/>
<dbReference type="KEGG" id="nta:800510"/>
<dbReference type="OrthoDB" id="1219953at2759"/>
<dbReference type="UniPathway" id="UPA00655">
    <property type="reaction ID" value="UER00711"/>
</dbReference>
<dbReference type="Proteomes" id="UP000084051">
    <property type="component" value="Unplaced"/>
</dbReference>
<dbReference type="GO" id="GO:0009317">
    <property type="term" value="C:acetyl-CoA carboxylase complex"/>
    <property type="evidence" value="ECO:0007669"/>
    <property type="project" value="InterPro"/>
</dbReference>
<dbReference type="GO" id="GO:0009570">
    <property type="term" value="C:chloroplast stroma"/>
    <property type="evidence" value="ECO:0007669"/>
    <property type="project" value="UniProtKB-SubCell"/>
</dbReference>
<dbReference type="GO" id="GO:0003989">
    <property type="term" value="F:acetyl-CoA carboxylase activity"/>
    <property type="evidence" value="ECO:0007669"/>
    <property type="project" value="InterPro"/>
</dbReference>
<dbReference type="GO" id="GO:0005524">
    <property type="term" value="F:ATP binding"/>
    <property type="evidence" value="ECO:0007669"/>
    <property type="project" value="UniProtKB-KW"/>
</dbReference>
<dbReference type="GO" id="GO:0016743">
    <property type="term" value="F:carboxyl- or carbamoyltransferase activity"/>
    <property type="evidence" value="ECO:0007669"/>
    <property type="project" value="UniProtKB-UniRule"/>
</dbReference>
<dbReference type="GO" id="GO:0008270">
    <property type="term" value="F:zinc ion binding"/>
    <property type="evidence" value="ECO:0007669"/>
    <property type="project" value="UniProtKB-UniRule"/>
</dbReference>
<dbReference type="GO" id="GO:0006633">
    <property type="term" value="P:fatty acid biosynthetic process"/>
    <property type="evidence" value="ECO:0007669"/>
    <property type="project" value="UniProtKB-KW"/>
</dbReference>
<dbReference type="GO" id="GO:2001295">
    <property type="term" value="P:malonyl-CoA biosynthetic process"/>
    <property type="evidence" value="ECO:0007669"/>
    <property type="project" value="UniProtKB-UniRule"/>
</dbReference>
<dbReference type="Gene3D" id="3.90.226.10">
    <property type="entry name" value="2-enoyl-CoA Hydratase, Chain A, domain 1"/>
    <property type="match status" value="1"/>
</dbReference>
<dbReference type="HAMAP" id="MF_01395">
    <property type="entry name" value="AcetylCoA_CT_beta"/>
    <property type="match status" value="1"/>
</dbReference>
<dbReference type="InterPro" id="IPR034733">
    <property type="entry name" value="AcCoA_carboxyl_beta"/>
</dbReference>
<dbReference type="InterPro" id="IPR000438">
    <property type="entry name" value="Acetyl_CoA_COase_Trfase_b_su"/>
</dbReference>
<dbReference type="InterPro" id="IPR029045">
    <property type="entry name" value="ClpP/crotonase-like_dom_sf"/>
</dbReference>
<dbReference type="InterPro" id="IPR011762">
    <property type="entry name" value="COA_CT_N"/>
</dbReference>
<dbReference type="NCBIfam" id="TIGR00515">
    <property type="entry name" value="accD"/>
    <property type="match status" value="1"/>
</dbReference>
<dbReference type="PANTHER" id="PTHR42995">
    <property type="entry name" value="ACETYL-COENZYME A CARBOXYLASE CARBOXYL TRANSFERASE SUBUNIT BETA, CHLOROPLASTIC"/>
    <property type="match status" value="1"/>
</dbReference>
<dbReference type="PANTHER" id="PTHR42995:SF5">
    <property type="entry name" value="ACETYL-COENZYME A CARBOXYLASE CARBOXYL TRANSFERASE SUBUNIT BETA, CHLOROPLASTIC"/>
    <property type="match status" value="1"/>
</dbReference>
<dbReference type="Pfam" id="PF01039">
    <property type="entry name" value="Carboxyl_trans"/>
    <property type="match status" value="1"/>
</dbReference>
<dbReference type="PRINTS" id="PR01070">
    <property type="entry name" value="ACCCTRFRASEB"/>
</dbReference>
<dbReference type="SUPFAM" id="SSF52096">
    <property type="entry name" value="ClpP/crotonase"/>
    <property type="match status" value="1"/>
</dbReference>
<dbReference type="PROSITE" id="PS50980">
    <property type="entry name" value="COA_CT_NTER"/>
    <property type="match status" value="1"/>
</dbReference>
<name>ACCD_TOBAC</name>
<evidence type="ECO:0000250" key="1"/>
<evidence type="ECO:0000255" key="2">
    <source>
        <dbReference type="HAMAP-Rule" id="MF_01395"/>
    </source>
</evidence>
<evidence type="ECO:0000255" key="3">
    <source>
        <dbReference type="PROSITE-ProRule" id="PRU01136"/>
    </source>
</evidence>
<evidence type="ECO:0000256" key="4">
    <source>
        <dbReference type="SAM" id="MobiDB-lite"/>
    </source>
</evidence>
<evidence type="ECO:0000269" key="5">
    <source>
    </source>
</evidence>
<evidence type="ECO:0000305" key="6"/>
<geneLocation type="chloroplast"/>
<keyword id="KW-0067">ATP-binding</keyword>
<keyword id="KW-0150">Chloroplast</keyword>
<keyword id="KW-0275">Fatty acid biosynthesis</keyword>
<keyword id="KW-0276">Fatty acid metabolism</keyword>
<keyword id="KW-0444">Lipid biosynthesis</keyword>
<keyword id="KW-0443">Lipid metabolism</keyword>
<keyword id="KW-0479">Metal-binding</keyword>
<keyword id="KW-0547">Nucleotide-binding</keyword>
<keyword id="KW-0934">Plastid</keyword>
<keyword id="KW-1185">Reference proteome</keyword>
<keyword id="KW-0808">Transferase</keyword>
<keyword id="KW-0862">Zinc</keyword>
<keyword id="KW-0863">Zinc-finger</keyword>
<proteinExistence type="evidence at protein level"/>